<proteinExistence type="evidence at protein level"/>
<organism>
    <name type="scientific">Mycobacteroides abscessus (strain ATCC 19977 / DSM 44196 / CCUG 20993 / CIP 104536 / JCM 13569 / NCTC 13031 / TMC 1543 / L948)</name>
    <name type="common">Mycobacterium abscessus</name>
    <dbReference type="NCBI Taxonomy" id="561007"/>
    <lineage>
        <taxon>Bacteria</taxon>
        <taxon>Bacillati</taxon>
        <taxon>Actinomycetota</taxon>
        <taxon>Actinomycetes</taxon>
        <taxon>Mycobacteriales</taxon>
        <taxon>Mycobacteriaceae</taxon>
        <taxon>Mycobacteroides</taxon>
        <taxon>Mycobacteroides abscessus</taxon>
    </lineage>
</organism>
<accession>B1MHW4</accession>
<sequence>MRPSLSDYQHVASGKVRELYRVDDEHLLFVATDRISAFDFVLDTPIPDKGRILTAMSVFFFGLLTVPNHLAGPPDDPRIPEEVLGRALLVRRLDMLPVECVARGYLTGSGLLDYQRTGAVCGHVLPQGLGEASRLDPPLFTPATKADIGEHDMNVDFAAVVGLVGAVRANQLRDETIKIYTRAAAHALHKGIILADTKFEFGVDIEGNLVLADEVFTPDSSRYWDAAHYQPGVVQDSFDKQFVRNWLTGPESGWDRASDTPPPPLPDEVAVATRERYIEAYERISGLSFSDWIGPSA</sequence>
<name>PUR7_MYCA9</name>
<comment type="catalytic activity">
    <reaction evidence="1">
        <text>5-amino-1-(5-phospho-D-ribosyl)imidazole-4-carboxylate + L-aspartate + ATP = (2S)-2-[5-amino-1-(5-phospho-beta-D-ribosyl)imidazole-4-carboxamido]succinate + ADP + phosphate + 2 H(+)</text>
        <dbReference type="Rhea" id="RHEA:22628"/>
        <dbReference type="ChEBI" id="CHEBI:15378"/>
        <dbReference type="ChEBI" id="CHEBI:29991"/>
        <dbReference type="ChEBI" id="CHEBI:30616"/>
        <dbReference type="ChEBI" id="CHEBI:43474"/>
        <dbReference type="ChEBI" id="CHEBI:58443"/>
        <dbReference type="ChEBI" id="CHEBI:77657"/>
        <dbReference type="ChEBI" id="CHEBI:456216"/>
        <dbReference type="EC" id="6.3.2.6"/>
    </reaction>
</comment>
<comment type="pathway">
    <text evidence="1">Purine metabolism; IMP biosynthesis via de novo pathway; 5-amino-1-(5-phospho-D-ribosyl)imidazole-4-carboxamide from 5-amino-1-(5-phospho-D-ribosyl)imidazole-4-carboxylate: step 1/2.</text>
</comment>
<comment type="similarity">
    <text evidence="1">Belongs to the SAICAR synthetase family.</text>
</comment>
<evidence type="ECO:0000255" key="1">
    <source>
        <dbReference type="HAMAP-Rule" id="MF_00137"/>
    </source>
</evidence>
<evidence type="ECO:0007829" key="2">
    <source>
        <dbReference type="PDB" id="3R9R"/>
    </source>
</evidence>
<evidence type="ECO:0007829" key="3">
    <source>
        <dbReference type="PDB" id="6YX3"/>
    </source>
</evidence>
<evidence type="ECO:0007829" key="4">
    <source>
        <dbReference type="PDB" id="6YY7"/>
    </source>
</evidence>
<gene>
    <name evidence="1" type="primary">purC</name>
    <name type="ordered locus">MAB_0689</name>
</gene>
<dbReference type="EC" id="6.3.2.6" evidence="1"/>
<dbReference type="EMBL" id="CU458896">
    <property type="protein sequence ID" value="CAM60786.1"/>
    <property type="molecule type" value="Genomic_DNA"/>
</dbReference>
<dbReference type="RefSeq" id="WP_005085602.1">
    <property type="nucleotide sequence ID" value="NZ_MLCG01000008.1"/>
</dbReference>
<dbReference type="PDB" id="3R9R">
    <property type="method" value="X-ray"/>
    <property type="resolution" value="1.85 A"/>
    <property type="chains" value="A=1-297"/>
</dbReference>
<dbReference type="PDB" id="6YVQ">
    <property type="method" value="X-ray"/>
    <property type="resolution" value="1.48 A"/>
    <property type="chains" value="A=1-297"/>
</dbReference>
<dbReference type="PDB" id="6YX3">
    <property type="method" value="X-ray"/>
    <property type="resolution" value="1.22 A"/>
    <property type="chains" value="A=1-297"/>
</dbReference>
<dbReference type="PDB" id="6YY6">
    <property type="method" value="X-ray"/>
    <property type="resolution" value="1.50 A"/>
    <property type="chains" value="A=1-297"/>
</dbReference>
<dbReference type="PDB" id="6YY7">
    <property type="method" value="X-ray"/>
    <property type="resolution" value="1.35 A"/>
    <property type="chains" value="A=1-297"/>
</dbReference>
<dbReference type="PDB" id="6YY8">
    <property type="method" value="X-ray"/>
    <property type="resolution" value="1.30 A"/>
    <property type="chains" value="A=1-297"/>
</dbReference>
<dbReference type="PDB" id="6YY9">
    <property type="method" value="X-ray"/>
    <property type="resolution" value="1.41 A"/>
    <property type="chains" value="A=1-297"/>
</dbReference>
<dbReference type="PDB" id="6YYA">
    <property type="method" value="X-ray"/>
    <property type="resolution" value="1.41 A"/>
    <property type="chains" value="A=1-297"/>
</dbReference>
<dbReference type="PDB" id="6YYB">
    <property type="method" value="X-ray"/>
    <property type="resolution" value="1.51 A"/>
    <property type="chains" value="A=1-297"/>
</dbReference>
<dbReference type="PDB" id="6YYC">
    <property type="method" value="X-ray"/>
    <property type="resolution" value="1.27 A"/>
    <property type="chains" value="A=1-297"/>
</dbReference>
<dbReference type="PDB" id="6YYD">
    <property type="method" value="X-ray"/>
    <property type="resolution" value="1.39 A"/>
    <property type="chains" value="A=1-297"/>
</dbReference>
<dbReference type="PDB" id="6Z0Q">
    <property type="method" value="X-ray"/>
    <property type="resolution" value="1.53 A"/>
    <property type="chains" value="A=1-297"/>
</dbReference>
<dbReference type="PDB" id="6Z0R">
    <property type="method" value="X-ray"/>
    <property type="resolution" value="1.31 A"/>
    <property type="chains" value="A=1-297"/>
</dbReference>
<dbReference type="PDBsum" id="3R9R"/>
<dbReference type="PDBsum" id="6YVQ"/>
<dbReference type="PDBsum" id="6YX3"/>
<dbReference type="PDBsum" id="6YY6"/>
<dbReference type="PDBsum" id="6YY7"/>
<dbReference type="PDBsum" id="6YY8"/>
<dbReference type="PDBsum" id="6YY9"/>
<dbReference type="PDBsum" id="6YYA"/>
<dbReference type="PDBsum" id="6YYB"/>
<dbReference type="PDBsum" id="6YYC"/>
<dbReference type="PDBsum" id="6YYD"/>
<dbReference type="PDBsum" id="6Z0Q"/>
<dbReference type="PDBsum" id="6Z0R"/>
<dbReference type="SMR" id="B1MHW4"/>
<dbReference type="GeneID" id="93377635"/>
<dbReference type="KEGG" id="mab:MAB_0689"/>
<dbReference type="UniPathway" id="UPA00074">
    <property type="reaction ID" value="UER00131"/>
</dbReference>
<dbReference type="EvolutionaryTrace" id="B1MHW4"/>
<dbReference type="Proteomes" id="UP000007137">
    <property type="component" value="Chromosome"/>
</dbReference>
<dbReference type="GO" id="GO:0005737">
    <property type="term" value="C:cytoplasm"/>
    <property type="evidence" value="ECO:0007669"/>
    <property type="project" value="TreeGrafter"/>
</dbReference>
<dbReference type="GO" id="GO:0005524">
    <property type="term" value="F:ATP binding"/>
    <property type="evidence" value="ECO:0007669"/>
    <property type="project" value="UniProtKB-KW"/>
</dbReference>
<dbReference type="GO" id="GO:0004639">
    <property type="term" value="F:phosphoribosylaminoimidazolesuccinocarboxamide synthase activity"/>
    <property type="evidence" value="ECO:0007669"/>
    <property type="project" value="UniProtKB-UniRule"/>
</dbReference>
<dbReference type="GO" id="GO:0006189">
    <property type="term" value="P:'de novo' IMP biosynthetic process"/>
    <property type="evidence" value="ECO:0007669"/>
    <property type="project" value="UniProtKB-UniRule"/>
</dbReference>
<dbReference type="CDD" id="cd01414">
    <property type="entry name" value="SAICAR_synt_Sc"/>
    <property type="match status" value="1"/>
</dbReference>
<dbReference type="FunFam" id="3.30.200.20:FF:000199">
    <property type="entry name" value="Phosphoribosylaminoimidazole-succinocarboxamide synthase"/>
    <property type="match status" value="1"/>
</dbReference>
<dbReference type="FunFam" id="3.30.470.20:FF:000015">
    <property type="entry name" value="Phosphoribosylaminoimidazole-succinocarboxamide synthase"/>
    <property type="match status" value="1"/>
</dbReference>
<dbReference type="Gene3D" id="3.30.470.20">
    <property type="entry name" value="ATP-grasp fold, B domain"/>
    <property type="match status" value="1"/>
</dbReference>
<dbReference type="Gene3D" id="3.30.200.20">
    <property type="entry name" value="Phosphorylase Kinase, domain 1"/>
    <property type="match status" value="1"/>
</dbReference>
<dbReference type="HAMAP" id="MF_00137">
    <property type="entry name" value="SAICAR_synth"/>
    <property type="match status" value="1"/>
</dbReference>
<dbReference type="InterPro" id="IPR028923">
    <property type="entry name" value="SAICAR_synt/ADE2_N"/>
</dbReference>
<dbReference type="InterPro" id="IPR001636">
    <property type="entry name" value="SAICAR_synth"/>
</dbReference>
<dbReference type="InterPro" id="IPR018236">
    <property type="entry name" value="SAICAR_synthetase_CS"/>
</dbReference>
<dbReference type="NCBIfam" id="NF010568">
    <property type="entry name" value="PRK13961.1"/>
    <property type="match status" value="1"/>
</dbReference>
<dbReference type="NCBIfam" id="TIGR00081">
    <property type="entry name" value="purC"/>
    <property type="match status" value="1"/>
</dbReference>
<dbReference type="PANTHER" id="PTHR43700">
    <property type="entry name" value="PHOSPHORIBOSYLAMINOIMIDAZOLE-SUCCINOCARBOXAMIDE SYNTHASE"/>
    <property type="match status" value="1"/>
</dbReference>
<dbReference type="PANTHER" id="PTHR43700:SF1">
    <property type="entry name" value="PHOSPHORIBOSYLAMINOIMIDAZOLE-SUCCINOCARBOXAMIDE SYNTHASE"/>
    <property type="match status" value="1"/>
</dbReference>
<dbReference type="Pfam" id="PF01259">
    <property type="entry name" value="SAICAR_synt"/>
    <property type="match status" value="1"/>
</dbReference>
<dbReference type="SUPFAM" id="SSF56104">
    <property type="entry name" value="SAICAR synthase-like"/>
    <property type="match status" value="1"/>
</dbReference>
<dbReference type="PROSITE" id="PS01057">
    <property type="entry name" value="SAICAR_SYNTHETASE_1"/>
    <property type="match status" value="1"/>
</dbReference>
<dbReference type="PROSITE" id="PS01058">
    <property type="entry name" value="SAICAR_SYNTHETASE_2"/>
    <property type="match status" value="1"/>
</dbReference>
<reference key="1">
    <citation type="journal article" date="2009" name="PLoS ONE">
        <title>Non mycobacterial virulence genes in the genome of the emerging pathogen Mycobacterium abscessus.</title>
        <authorList>
            <person name="Ripoll F."/>
            <person name="Pasek S."/>
            <person name="Schenowitz C."/>
            <person name="Dossat C."/>
            <person name="Barbe V."/>
            <person name="Rottman M."/>
            <person name="Macheras E."/>
            <person name="Heym B."/>
            <person name="Herrmann J.L."/>
            <person name="Daffe M."/>
            <person name="Brosch R."/>
            <person name="Risler J.L."/>
            <person name="Gaillard J.L."/>
        </authorList>
    </citation>
    <scope>NUCLEOTIDE SEQUENCE [LARGE SCALE GENOMIC DNA]</scope>
    <source>
        <strain>ATCC 19977 / DSM 44196 / CCUG 20993 / CIP 104536 / JCM 13569 / NCTC 13031 / TMC 1543 / L948</strain>
    </source>
</reference>
<keyword id="KW-0002">3D-structure</keyword>
<keyword id="KW-0067">ATP-binding</keyword>
<keyword id="KW-0436">Ligase</keyword>
<keyword id="KW-0547">Nucleotide-binding</keyword>
<keyword id="KW-0658">Purine biosynthesis</keyword>
<keyword id="KW-1185">Reference proteome</keyword>
<protein>
    <recommendedName>
        <fullName evidence="1">Phosphoribosylaminoimidazole-succinocarboxamide synthase</fullName>
        <ecNumber evidence="1">6.3.2.6</ecNumber>
    </recommendedName>
    <alternativeName>
        <fullName evidence="1">SAICAR synthetase</fullName>
    </alternativeName>
</protein>
<feature type="chain" id="PRO_1000095995" description="Phosphoribosylaminoimidazole-succinocarboxamide synthase">
    <location>
        <begin position="1"/>
        <end position="297"/>
    </location>
</feature>
<feature type="helix" evidence="3">
    <location>
        <begin position="5"/>
        <end position="7"/>
    </location>
</feature>
<feature type="strand" evidence="3">
    <location>
        <begin position="8"/>
        <end position="12"/>
    </location>
</feature>
<feature type="strand" evidence="3">
    <location>
        <begin position="15"/>
        <end position="23"/>
    </location>
</feature>
<feature type="strand" evidence="3">
    <location>
        <begin position="26"/>
        <end position="31"/>
    </location>
</feature>
<feature type="helix" evidence="3">
    <location>
        <begin position="49"/>
        <end position="63"/>
    </location>
</feature>
<feature type="helix" evidence="3">
    <location>
        <begin position="81"/>
        <end position="83"/>
    </location>
</feature>
<feature type="strand" evidence="3">
    <location>
        <begin position="86"/>
        <end position="91"/>
    </location>
</feature>
<feature type="strand" evidence="3">
    <location>
        <begin position="97"/>
        <end position="106"/>
    </location>
</feature>
<feature type="helix" evidence="3">
    <location>
        <begin position="108"/>
        <end position="117"/>
    </location>
</feature>
<feature type="strand" evidence="3">
    <location>
        <begin position="118"/>
        <end position="120"/>
    </location>
</feature>
<feature type="strand" evidence="3">
    <location>
        <begin position="133"/>
        <end position="140"/>
    </location>
</feature>
<feature type="strand" evidence="4">
    <location>
        <begin position="148"/>
        <end position="150"/>
    </location>
</feature>
<feature type="helix" evidence="3">
    <location>
        <begin position="157"/>
        <end position="164"/>
    </location>
</feature>
<feature type="helix" evidence="3">
    <location>
        <begin position="166"/>
        <end position="189"/>
    </location>
</feature>
<feature type="strand" evidence="3">
    <location>
        <begin position="192"/>
        <end position="203"/>
    </location>
</feature>
<feature type="strand" evidence="3">
    <location>
        <begin position="209"/>
        <end position="213"/>
    </location>
</feature>
<feature type="turn" evidence="3">
    <location>
        <begin position="218"/>
        <end position="220"/>
    </location>
</feature>
<feature type="strand" evidence="3">
    <location>
        <begin position="221"/>
        <end position="225"/>
    </location>
</feature>
<feature type="helix" evidence="3">
    <location>
        <begin position="226"/>
        <end position="228"/>
    </location>
</feature>
<feature type="turn" evidence="3">
    <location>
        <begin position="238"/>
        <end position="240"/>
    </location>
</feature>
<feature type="helix" evidence="3">
    <location>
        <begin position="241"/>
        <end position="247"/>
    </location>
</feature>
<feature type="strand" evidence="2">
    <location>
        <begin position="249"/>
        <end position="252"/>
    </location>
</feature>
<feature type="helix" evidence="3">
    <location>
        <begin position="256"/>
        <end position="258"/>
    </location>
</feature>
<feature type="helix" evidence="3">
    <location>
        <begin position="267"/>
        <end position="285"/>
    </location>
</feature>
<feature type="helix" evidence="3">
    <location>
        <begin position="289"/>
        <end position="291"/>
    </location>
</feature>